<accession>Q4JT30</accession>
<name>RL7_CORJK</name>
<comment type="function">
    <text evidence="1">Forms part of the ribosomal stalk which helps the ribosome interact with GTP-bound translation factors. Is thus essential for accurate translation.</text>
</comment>
<comment type="subunit">
    <text evidence="1">Homodimer. Part of the ribosomal stalk of the 50S ribosomal subunit. Forms a multimeric L10(L12)X complex, where L10 forms an elongated spine to which 2 to 4 L12 dimers bind in a sequential fashion. Binds GTP-bound translation factors.</text>
</comment>
<comment type="similarity">
    <text evidence="1">Belongs to the bacterial ribosomal protein bL12 family.</text>
</comment>
<organism>
    <name type="scientific">Corynebacterium jeikeium (strain K411)</name>
    <dbReference type="NCBI Taxonomy" id="306537"/>
    <lineage>
        <taxon>Bacteria</taxon>
        <taxon>Bacillati</taxon>
        <taxon>Actinomycetota</taxon>
        <taxon>Actinomycetes</taxon>
        <taxon>Mycobacteriales</taxon>
        <taxon>Corynebacteriaceae</taxon>
        <taxon>Corynebacterium</taxon>
    </lineage>
</organism>
<protein>
    <recommendedName>
        <fullName evidence="1">Large ribosomal subunit protein bL12</fullName>
    </recommendedName>
    <alternativeName>
        <fullName evidence="2">50S ribosomal protein L7/L12</fullName>
    </alternativeName>
</protein>
<evidence type="ECO:0000255" key="1">
    <source>
        <dbReference type="HAMAP-Rule" id="MF_00368"/>
    </source>
</evidence>
<evidence type="ECO:0000305" key="2"/>
<gene>
    <name evidence="1" type="primary">rplL</name>
    <name type="ordered locus">jk1848</name>
</gene>
<feature type="chain" id="PRO_0000243414" description="Large ribosomal subunit protein bL12">
    <location>
        <begin position="1"/>
        <end position="128"/>
    </location>
</feature>
<reference key="1">
    <citation type="journal article" date="2005" name="J. Bacteriol.">
        <title>Complete genome sequence and analysis of the multiresistant nosocomial pathogen Corynebacterium jeikeium K411, a lipid-requiring bacterium of the human skin flora.</title>
        <authorList>
            <person name="Tauch A."/>
            <person name="Kaiser O."/>
            <person name="Hain T."/>
            <person name="Goesmann A."/>
            <person name="Weisshaar B."/>
            <person name="Albersmeier A."/>
            <person name="Bekel T."/>
            <person name="Bischoff N."/>
            <person name="Brune I."/>
            <person name="Chakraborty T."/>
            <person name="Kalinowski J."/>
            <person name="Meyer F."/>
            <person name="Rupp O."/>
            <person name="Schneiker S."/>
            <person name="Viehoever P."/>
            <person name="Puehler A."/>
        </authorList>
    </citation>
    <scope>NUCLEOTIDE SEQUENCE [LARGE SCALE GENOMIC DNA]</scope>
    <source>
        <strain>K411</strain>
    </source>
</reference>
<dbReference type="EMBL" id="CR931997">
    <property type="protein sequence ID" value="CAI38027.1"/>
    <property type="molecule type" value="Genomic_DNA"/>
</dbReference>
<dbReference type="RefSeq" id="WP_011274179.1">
    <property type="nucleotide sequence ID" value="NC_007164.1"/>
</dbReference>
<dbReference type="SMR" id="Q4JT30"/>
<dbReference type="STRING" id="306537.jk1848"/>
<dbReference type="KEGG" id="cjk:jk1848"/>
<dbReference type="PATRIC" id="fig|306537.10.peg.1874"/>
<dbReference type="eggNOG" id="COG0222">
    <property type="taxonomic scope" value="Bacteria"/>
</dbReference>
<dbReference type="HOGENOM" id="CLU_086499_3_0_11"/>
<dbReference type="OrthoDB" id="9811748at2"/>
<dbReference type="Proteomes" id="UP000000545">
    <property type="component" value="Chromosome"/>
</dbReference>
<dbReference type="GO" id="GO:0022625">
    <property type="term" value="C:cytosolic large ribosomal subunit"/>
    <property type="evidence" value="ECO:0007669"/>
    <property type="project" value="TreeGrafter"/>
</dbReference>
<dbReference type="GO" id="GO:0003729">
    <property type="term" value="F:mRNA binding"/>
    <property type="evidence" value="ECO:0007669"/>
    <property type="project" value="TreeGrafter"/>
</dbReference>
<dbReference type="GO" id="GO:0003735">
    <property type="term" value="F:structural constituent of ribosome"/>
    <property type="evidence" value="ECO:0007669"/>
    <property type="project" value="InterPro"/>
</dbReference>
<dbReference type="GO" id="GO:0006412">
    <property type="term" value="P:translation"/>
    <property type="evidence" value="ECO:0007669"/>
    <property type="project" value="UniProtKB-UniRule"/>
</dbReference>
<dbReference type="CDD" id="cd00387">
    <property type="entry name" value="Ribosomal_L7_L12"/>
    <property type="match status" value="1"/>
</dbReference>
<dbReference type="FunFam" id="3.30.1390.10:FF:000001">
    <property type="entry name" value="50S ribosomal protein L7/L12"/>
    <property type="match status" value="1"/>
</dbReference>
<dbReference type="Gene3D" id="3.30.1390.10">
    <property type="match status" value="1"/>
</dbReference>
<dbReference type="Gene3D" id="1.20.5.710">
    <property type="entry name" value="Single helix bin"/>
    <property type="match status" value="1"/>
</dbReference>
<dbReference type="HAMAP" id="MF_00368">
    <property type="entry name" value="Ribosomal_bL12"/>
    <property type="match status" value="1"/>
</dbReference>
<dbReference type="InterPro" id="IPR000206">
    <property type="entry name" value="Ribosomal_bL12"/>
</dbReference>
<dbReference type="InterPro" id="IPR013823">
    <property type="entry name" value="Ribosomal_bL12_C"/>
</dbReference>
<dbReference type="InterPro" id="IPR014719">
    <property type="entry name" value="Ribosomal_bL12_C/ClpS-like"/>
</dbReference>
<dbReference type="InterPro" id="IPR008932">
    <property type="entry name" value="Ribosomal_bL12_oligo"/>
</dbReference>
<dbReference type="InterPro" id="IPR036235">
    <property type="entry name" value="Ribosomal_bL12_oligo_N_sf"/>
</dbReference>
<dbReference type="NCBIfam" id="TIGR00855">
    <property type="entry name" value="L12"/>
    <property type="match status" value="1"/>
</dbReference>
<dbReference type="PANTHER" id="PTHR45987">
    <property type="entry name" value="39S RIBOSOMAL PROTEIN L12"/>
    <property type="match status" value="1"/>
</dbReference>
<dbReference type="PANTHER" id="PTHR45987:SF4">
    <property type="entry name" value="LARGE RIBOSOMAL SUBUNIT PROTEIN BL12M"/>
    <property type="match status" value="1"/>
</dbReference>
<dbReference type="Pfam" id="PF00542">
    <property type="entry name" value="Ribosomal_L12"/>
    <property type="match status" value="1"/>
</dbReference>
<dbReference type="Pfam" id="PF16320">
    <property type="entry name" value="Ribosomal_L12_N"/>
    <property type="match status" value="1"/>
</dbReference>
<dbReference type="SUPFAM" id="SSF54736">
    <property type="entry name" value="ClpS-like"/>
    <property type="match status" value="1"/>
</dbReference>
<dbReference type="SUPFAM" id="SSF48300">
    <property type="entry name" value="Ribosomal protein L7/12, oligomerisation (N-terminal) domain"/>
    <property type="match status" value="1"/>
</dbReference>
<proteinExistence type="inferred from homology"/>
<sequence length="128" mass="13344">MAKLTKDELIEAFKEMTLIELSEFVKEFEEVFDVTAAAPVAAVAAAPGAEGGAAAEEKDEFDVVLEDAGAKKIGVIKVVREIVSGLGLKEAKELVEGAPKAILEGASKDDAEAAKTKLEEAGAKVSLK</sequence>
<keyword id="KW-1185">Reference proteome</keyword>
<keyword id="KW-0687">Ribonucleoprotein</keyword>
<keyword id="KW-0689">Ribosomal protein</keyword>